<evidence type="ECO:0000250" key="1"/>
<evidence type="ECO:0000255" key="2"/>
<evidence type="ECO:0000303" key="3">
    <source>
    </source>
</evidence>
<evidence type="ECO:0000305" key="4"/>
<dbReference type="EMBL" id="AK028521">
    <property type="protein sequence ID" value="BAC25988.1"/>
    <property type="molecule type" value="mRNA"/>
</dbReference>
<dbReference type="EMBL" id="AK049828">
    <property type="protein sequence ID" value="BAC33940.1"/>
    <property type="molecule type" value="mRNA"/>
</dbReference>
<dbReference type="EMBL" id="AK154847">
    <property type="protein sequence ID" value="BAE32873.1"/>
    <property type="molecule type" value="mRNA"/>
</dbReference>
<dbReference type="EMBL" id="BC079659">
    <property type="protein sequence ID" value="AAH79659.1"/>
    <property type="molecule type" value="mRNA"/>
</dbReference>
<dbReference type="CCDS" id="CCDS23307.1">
    <molecule id="Q8C7N7-1"/>
</dbReference>
<dbReference type="RefSeq" id="NP_808251.1">
    <molecule id="Q8C7N7-1"/>
    <property type="nucleotide sequence ID" value="NM_177583.4"/>
</dbReference>
<dbReference type="SMR" id="Q8C7N7"/>
<dbReference type="BioGRID" id="228950">
    <property type="interactions" value="14"/>
</dbReference>
<dbReference type="ComplexPortal" id="CPX-4235">
    <property type="entry name" value="Gamma-secretase complex, Aph1b-Psen1 variant"/>
</dbReference>
<dbReference type="ComplexPortal" id="CPX-4237">
    <property type="entry name" value="Gamma-secretase complex, Aph1b-Psen2 variant"/>
</dbReference>
<dbReference type="FunCoup" id="Q8C7N7">
    <property type="interactions" value="1715"/>
</dbReference>
<dbReference type="STRING" id="10090.ENSMUSP00000034934"/>
<dbReference type="PhosphoSitePlus" id="Q8C7N7"/>
<dbReference type="PaxDb" id="10090-ENSMUSP00000034934"/>
<dbReference type="ProteomicsDB" id="296371">
    <molecule id="Q8C7N7-1"/>
</dbReference>
<dbReference type="ProteomicsDB" id="296372">
    <molecule id="Q8C7N7-2"/>
</dbReference>
<dbReference type="DNASU" id="208117"/>
<dbReference type="Ensembl" id="ENSMUST00000034934.15">
    <molecule id="Q8C7N7-1"/>
    <property type="protein sequence ID" value="ENSMUSP00000034934.9"/>
    <property type="gene ID" value="ENSMUSG00000032375.16"/>
</dbReference>
<dbReference type="Ensembl" id="ENSMUST00000168309.8">
    <molecule id="Q8C7N7-2"/>
    <property type="protein sequence ID" value="ENSMUSP00000125816.2"/>
    <property type="gene ID" value="ENSMUSG00000032375.16"/>
</dbReference>
<dbReference type="GeneID" id="208117"/>
<dbReference type="KEGG" id="mmu:208117"/>
<dbReference type="UCSC" id="uc009qfe.1">
    <molecule id="Q8C7N7-1"/>
    <property type="organism name" value="mouse"/>
</dbReference>
<dbReference type="AGR" id="MGI:3522097"/>
<dbReference type="CTD" id="83464"/>
<dbReference type="MGI" id="MGI:3522097">
    <property type="gene designation" value="Aph1b"/>
</dbReference>
<dbReference type="VEuPathDB" id="HostDB:ENSMUSG00000032375"/>
<dbReference type="eggNOG" id="KOG3972">
    <property type="taxonomic scope" value="Eukaryota"/>
</dbReference>
<dbReference type="GeneTree" id="ENSGT00390000002049"/>
<dbReference type="HOGENOM" id="CLU_086389_0_0_1"/>
<dbReference type="InParanoid" id="Q8C7N7"/>
<dbReference type="OMA" id="PTYIIMF"/>
<dbReference type="OrthoDB" id="6507463at2759"/>
<dbReference type="PhylomeDB" id="Q8C7N7"/>
<dbReference type="TreeFam" id="TF314362"/>
<dbReference type="Reactome" id="R-MMU-1251985">
    <property type="pathway name" value="Nuclear signaling by ERBB4"/>
</dbReference>
<dbReference type="Reactome" id="R-MMU-193692">
    <property type="pathway name" value="Regulated proteolysis of p75NTR"/>
</dbReference>
<dbReference type="Reactome" id="R-MMU-205043">
    <property type="pathway name" value="NRIF signals cell death from the nucleus"/>
</dbReference>
<dbReference type="Reactome" id="R-MMU-3928665">
    <property type="pathway name" value="EPH-ephrin mediated repulsion of cells"/>
</dbReference>
<dbReference type="Reactome" id="R-MMU-9013507">
    <property type="pathway name" value="NOTCH3 Activation and Transmission of Signal to the Nucleus"/>
</dbReference>
<dbReference type="Reactome" id="R-MMU-9017802">
    <property type="pathway name" value="Noncanonical activation of NOTCH3"/>
</dbReference>
<dbReference type="Reactome" id="R-MMU-9839383">
    <property type="pathway name" value="TGFBR3 PTM regulation"/>
</dbReference>
<dbReference type="BioGRID-ORCS" id="208117">
    <property type="hits" value="3 hits in 78 CRISPR screens"/>
</dbReference>
<dbReference type="ChiTaRS" id="Aph1b">
    <property type="organism name" value="mouse"/>
</dbReference>
<dbReference type="PRO" id="PR:Q8C7N7"/>
<dbReference type="Proteomes" id="UP000000589">
    <property type="component" value="Chromosome 9"/>
</dbReference>
<dbReference type="RNAct" id="Q8C7N7">
    <property type="molecule type" value="protein"/>
</dbReference>
<dbReference type="Bgee" id="ENSMUSG00000032375">
    <property type="expression patterns" value="Expressed in otolith organ and 219 other cell types or tissues"/>
</dbReference>
<dbReference type="ExpressionAtlas" id="Q8C7N7">
    <property type="expression patterns" value="baseline and differential"/>
</dbReference>
<dbReference type="GO" id="GO:0005783">
    <property type="term" value="C:endoplasmic reticulum"/>
    <property type="evidence" value="ECO:0000303"/>
    <property type="project" value="ComplexPortal"/>
</dbReference>
<dbReference type="GO" id="GO:0070765">
    <property type="term" value="C:gamma-secretase complex"/>
    <property type="evidence" value="ECO:0000314"/>
    <property type="project" value="MGI"/>
</dbReference>
<dbReference type="GO" id="GO:0000139">
    <property type="term" value="C:Golgi membrane"/>
    <property type="evidence" value="ECO:0000303"/>
    <property type="project" value="ComplexPortal"/>
</dbReference>
<dbReference type="GO" id="GO:0005886">
    <property type="term" value="C:plasma membrane"/>
    <property type="evidence" value="ECO:0000250"/>
    <property type="project" value="ComplexPortal"/>
</dbReference>
<dbReference type="GO" id="GO:0045202">
    <property type="term" value="C:synapse"/>
    <property type="evidence" value="ECO:0007669"/>
    <property type="project" value="GOC"/>
</dbReference>
<dbReference type="GO" id="GO:0042987">
    <property type="term" value="P:amyloid precursor protein catabolic process"/>
    <property type="evidence" value="ECO:0000250"/>
    <property type="project" value="ComplexPortal"/>
</dbReference>
<dbReference type="GO" id="GO:0034205">
    <property type="term" value="P:amyloid-beta formation"/>
    <property type="evidence" value="ECO:0000316"/>
    <property type="project" value="MGI"/>
</dbReference>
<dbReference type="GO" id="GO:0006509">
    <property type="term" value="P:membrane protein ectodomain proteolysis"/>
    <property type="evidence" value="ECO:0000316"/>
    <property type="project" value="MGI"/>
</dbReference>
<dbReference type="GO" id="GO:0031293">
    <property type="term" value="P:membrane protein intracellular domain proteolysis"/>
    <property type="evidence" value="ECO:0000250"/>
    <property type="project" value="ComplexPortal"/>
</dbReference>
<dbReference type="GO" id="GO:0007220">
    <property type="term" value="P:Notch receptor processing"/>
    <property type="evidence" value="ECO:0000303"/>
    <property type="project" value="ComplexPortal"/>
</dbReference>
<dbReference type="GO" id="GO:0007219">
    <property type="term" value="P:Notch signaling pathway"/>
    <property type="evidence" value="ECO:0007669"/>
    <property type="project" value="UniProtKB-KW"/>
</dbReference>
<dbReference type="GO" id="GO:0060134">
    <property type="term" value="P:prepulse inhibition"/>
    <property type="evidence" value="ECO:0000316"/>
    <property type="project" value="MGI"/>
</dbReference>
<dbReference type="GO" id="GO:0016485">
    <property type="term" value="P:protein processing"/>
    <property type="evidence" value="ECO:0007669"/>
    <property type="project" value="InterPro"/>
</dbReference>
<dbReference type="GO" id="GO:0007614">
    <property type="term" value="P:short-term memory"/>
    <property type="evidence" value="ECO:0000316"/>
    <property type="project" value="MGI"/>
</dbReference>
<dbReference type="GO" id="GO:0001963">
    <property type="term" value="P:synaptic transmission, dopaminergic"/>
    <property type="evidence" value="ECO:0000316"/>
    <property type="project" value="MGI"/>
</dbReference>
<dbReference type="GO" id="GO:0035249">
    <property type="term" value="P:synaptic transmission, glutamatergic"/>
    <property type="evidence" value="ECO:0000316"/>
    <property type="project" value="MGI"/>
</dbReference>
<dbReference type="InterPro" id="IPR009294">
    <property type="entry name" value="Aph-1"/>
</dbReference>
<dbReference type="PANTHER" id="PTHR12889">
    <property type="entry name" value="GAMMA-SECRETASE SUBUNIT APH-1"/>
    <property type="match status" value="1"/>
</dbReference>
<dbReference type="Pfam" id="PF06105">
    <property type="entry name" value="Aph-1"/>
    <property type="match status" value="1"/>
</dbReference>
<keyword id="KW-0025">Alternative splicing</keyword>
<keyword id="KW-0472">Membrane</keyword>
<keyword id="KW-0914">Notch signaling pathway</keyword>
<keyword id="KW-1185">Reference proteome</keyword>
<keyword id="KW-0812">Transmembrane</keyword>
<keyword id="KW-1133">Transmembrane helix</keyword>
<feature type="chain" id="PRO_0000221053" description="Gamma-secretase subunit APH-1B">
    <location>
        <begin position="1"/>
        <end position="257"/>
    </location>
</feature>
<feature type="transmembrane region" description="Helical; Name=1" evidence="2">
    <location>
        <begin position="5"/>
        <end position="25"/>
    </location>
</feature>
<feature type="transmembrane region" description="Helical; Name=2" evidence="2">
    <location>
        <begin position="32"/>
        <end position="52"/>
    </location>
</feature>
<feature type="transmembrane region" description="Helical; Name=3" evidence="2">
    <location>
        <begin position="66"/>
        <end position="86"/>
    </location>
</feature>
<feature type="transmembrane region" description="Helical; Name=4" evidence="2">
    <location>
        <begin position="115"/>
        <end position="135"/>
    </location>
</feature>
<feature type="transmembrane region" description="Helical; Name=5" evidence="2">
    <location>
        <begin position="160"/>
        <end position="180"/>
    </location>
</feature>
<feature type="transmembrane region" description="Helical; Name=6" evidence="2">
    <location>
        <begin position="186"/>
        <end position="206"/>
    </location>
</feature>
<feature type="transmembrane region" description="Helical; Name=7" evidence="2">
    <location>
        <begin position="213"/>
        <end position="233"/>
    </location>
</feature>
<feature type="splice variant" id="VSP_008359" description="In isoform 2." evidence="3">
    <original>AFMTLVVIMLHVFWGVVFFDGCEKNKWYTLLTVLLTHLVVSTQTFLSPYYEVN</original>
    <variation>VRISASPMDINSVSHSREPVLCAASKLVFPVGKVFDFLRPAAYSSDYLTPALS</variation>
    <location>
        <begin position="160"/>
        <end position="212"/>
    </location>
</feature>
<feature type="splice variant" id="VSP_008360" description="In isoform 2." evidence="3">
    <location>
        <begin position="213"/>
        <end position="257"/>
    </location>
</feature>
<protein>
    <recommendedName>
        <fullName>Gamma-secretase subunit APH-1B</fullName>
        <shortName>APH-1b</shortName>
    </recommendedName>
    <alternativeName>
        <fullName>Aph-1beta</fullName>
    </alternativeName>
</protein>
<reference key="1">
    <citation type="journal article" date="2005" name="Science">
        <title>The transcriptional landscape of the mammalian genome.</title>
        <authorList>
            <person name="Carninci P."/>
            <person name="Kasukawa T."/>
            <person name="Katayama S."/>
            <person name="Gough J."/>
            <person name="Frith M.C."/>
            <person name="Maeda N."/>
            <person name="Oyama R."/>
            <person name="Ravasi T."/>
            <person name="Lenhard B."/>
            <person name="Wells C."/>
            <person name="Kodzius R."/>
            <person name="Shimokawa K."/>
            <person name="Bajic V.B."/>
            <person name="Brenner S.E."/>
            <person name="Batalov S."/>
            <person name="Forrest A.R."/>
            <person name="Zavolan M."/>
            <person name="Davis M.J."/>
            <person name="Wilming L.G."/>
            <person name="Aidinis V."/>
            <person name="Allen J.E."/>
            <person name="Ambesi-Impiombato A."/>
            <person name="Apweiler R."/>
            <person name="Aturaliya R.N."/>
            <person name="Bailey T.L."/>
            <person name="Bansal M."/>
            <person name="Baxter L."/>
            <person name="Beisel K.W."/>
            <person name="Bersano T."/>
            <person name="Bono H."/>
            <person name="Chalk A.M."/>
            <person name="Chiu K.P."/>
            <person name="Choudhary V."/>
            <person name="Christoffels A."/>
            <person name="Clutterbuck D.R."/>
            <person name="Crowe M.L."/>
            <person name="Dalla E."/>
            <person name="Dalrymple B.P."/>
            <person name="de Bono B."/>
            <person name="Della Gatta G."/>
            <person name="di Bernardo D."/>
            <person name="Down T."/>
            <person name="Engstrom P."/>
            <person name="Fagiolini M."/>
            <person name="Faulkner G."/>
            <person name="Fletcher C.F."/>
            <person name="Fukushima T."/>
            <person name="Furuno M."/>
            <person name="Futaki S."/>
            <person name="Gariboldi M."/>
            <person name="Georgii-Hemming P."/>
            <person name="Gingeras T.R."/>
            <person name="Gojobori T."/>
            <person name="Green R.E."/>
            <person name="Gustincich S."/>
            <person name="Harbers M."/>
            <person name="Hayashi Y."/>
            <person name="Hensch T.K."/>
            <person name="Hirokawa N."/>
            <person name="Hill D."/>
            <person name="Huminiecki L."/>
            <person name="Iacono M."/>
            <person name="Ikeo K."/>
            <person name="Iwama A."/>
            <person name="Ishikawa T."/>
            <person name="Jakt M."/>
            <person name="Kanapin A."/>
            <person name="Katoh M."/>
            <person name="Kawasawa Y."/>
            <person name="Kelso J."/>
            <person name="Kitamura H."/>
            <person name="Kitano H."/>
            <person name="Kollias G."/>
            <person name="Krishnan S.P."/>
            <person name="Kruger A."/>
            <person name="Kummerfeld S.K."/>
            <person name="Kurochkin I.V."/>
            <person name="Lareau L.F."/>
            <person name="Lazarevic D."/>
            <person name="Lipovich L."/>
            <person name="Liu J."/>
            <person name="Liuni S."/>
            <person name="McWilliam S."/>
            <person name="Madan Babu M."/>
            <person name="Madera M."/>
            <person name="Marchionni L."/>
            <person name="Matsuda H."/>
            <person name="Matsuzawa S."/>
            <person name="Miki H."/>
            <person name="Mignone F."/>
            <person name="Miyake S."/>
            <person name="Morris K."/>
            <person name="Mottagui-Tabar S."/>
            <person name="Mulder N."/>
            <person name="Nakano N."/>
            <person name="Nakauchi H."/>
            <person name="Ng P."/>
            <person name="Nilsson R."/>
            <person name="Nishiguchi S."/>
            <person name="Nishikawa S."/>
            <person name="Nori F."/>
            <person name="Ohara O."/>
            <person name="Okazaki Y."/>
            <person name="Orlando V."/>
            <person name="Pang K.C."/>
            <person name="Pavan W.J."/>
            <person name="Pavesi G."/>
            <person name="Pesole G."/>
            <person name="Petrovsky N."/>
            <person name="Piazza S."/>
            <person name="Reed J."/>
            <person name="Reid J.F."/>
            <person name="Ring B.Z."/>
            <person name="Ringwald M."/>
            <person name="Rost B."/>
            <person name="Ruan Y."/>
            <person name="Salzberg S.L."/>
            <person name="Sandelin A."/>
            <person name="Schneider C."/>
            <person name="Schoenbach C."/>
            <person name="Sekiguchi K."/>
            <person name="Semple C.A."/>
            <person name="Seno S."/>
            <person name="Sessa L."/>
            <person name="Sheng Y."/>
            <person name="Shibata Y."/>
            <person name="Shimada H."/>
            <person name="Shimada K."/>
            <person name="Silva D."/>
            <person name="Sinclair B."/>
            <person name="Sperling S."/>
            <person name="Stupka E."/>
            <person name="Sugiura K."/>
            <person name="Sultana R."/>
            <person name="Takenaka Y."/>
            <person name="Taki K."/>
            <person name="Tammoja K."/>
            <person name="Tan S.L."/>
            <person name="Tang S."/>
            <person name="Taylor M.S."/>
            <person name="Tegner J."/>
            <person name="Teichmann S.A."/>
            <person name="Ueda H.R."/>
            <person name="van Nimwegen E."/>
            <person name="Verardo R."/>
            <person name="Wei C.L."/>
            <person name="Yagi K."/>
            <person name="Yamanishi H."/>
            <person name="Zabarovsky E."/>
            <person name="Zhu S."/>
            <person name="Zimmer A."/>
            <person name="Hide W."/>
            <person name="Bult C."/>
            <person name="Grimmond S.M."/>
            <person name="Teasdale R.D."/>
            <person name="Liu E.T."/>
            <person name="Brusic V."/>
            <person name="Quackenbush J."/>
            <person name="Wahlestedt C."/>
            <person name="Mattick J.S."/>
            <person name="Hume D.A."/>
            <person name="Kai C."/>
            <person name="Sasaki D."/>
            <person name="Tomaru Y."/>
            <person name="Fukuda S."/>
            <person name="Kanamori-Katayama M."/>
            <person name="Suzuki M."/>
            <person name="Aoki J."/>
            <person name="Arakawa T."/>
            <person name="Iida J."/>
            <person name="Imamura K."/>
            <person name="Itoh M."/>
            <person name="Kato T."/>
            <person name="Kawaji H."/>
            <person name="Kawagashira N."/>
            <person name="Kawashima T."/>
            <person name="Kojima M."/>
            <person name="Kondo S."/>
            <person name="Konno H."/>
            <person name="Nakano K."/>
            <person name="Ninomiya N."/>
            <person name="Nishio T."/>
            <person name="Okada M."/>
            <person name="Plessy C."/>
            <person name="Shibata K."/>
            <person name="Shiraki T."/>
            <person name="Suzuki S."/>
            <person name="Tagami M."/>
            <person name="Waki K."/>
            <person name="Watahiki A."/>
            <person name="Okamura-Oho Y."/>
            <person name="Suzuki H."/>
            <person name="Kawai J."/>
            <person name="Hayashizaki Y."/>
        </authorList>
    </citation>
    <scope>NUCLEOTIDE SEQUENCE [LARGE SCALE MRNA] (ISOFORMS 1 AND 2)</scope>
    <source>
        <strain>C57BL/6J</strain>
        <strain>NOD</strain>
        <tissue>Hippocampus</tissue>
        <tissue>Skin</tissue>
    </source>
</reference>
<reference key="2">
    <citation type="journal article" date="2004" name="Genome Res.">
        <title>The status, quality, and expansion of the NIH full-length cDNA project: the Mammalian Gene Collection (MGC).</title>
        <authorList>
            <consortium name="The MGC Project Team"/>
        </authorList>
    </citation>
    <scope>NUCLEOTIDE SEQUENCE [LARGE SCALE MRNA] (ISOFORM 1)</scope>
    <source>
        <strain>C57BL/6J</strain>
        <tissue>Brain</tissue>
    </source>
</reference>
<organism>
    <name type="scientific">Mus musculus</name>
    <name type="common">Mouse</name>
    <dbReference type="NCBI Taxonomy" id="10090"/>
    <lineage>
        <taxon>Eukaryota</taxon>
        <taxon>Metazoa</taxon>
        <taxon>Chordata</taxon>
        <taxon>Craniata</taxon>
        <taxon>Vertebrata</taxon>
        <taxon>Euteleostomi</taxon>
        <taxon>Mammalia</taxon>
        <taxon>Eutheria</taxon>
        <taxon>Euarchontoglires</taxon>
        <taxon>Glires</taxon>
        <taxon>Rodentia</taxon>
        <taxon>Myomorpha</taxon>
        <taxon>Muroidea</taxon>
        <taxon>Muridae</taxon>
        <taxon>Murinae</taxon>
        <taxon>Mus</taxon>
        <taxon>Mus</taxon>
    </lineage>
</organism>
<gene>
    <name type="primary">Aph1b</name>
</gene>
<proteinExistence type="evidence at transcript level"/>
<accession>Q8C7N7</accession>
<accession>Q3U3B5</accession>
<accession>Q8CEC9</accession>
<sequence>MTAAVFFGCAFIAFGPALALYVFTIATDPLRVIFLIAGAFFWLVSLLLSSVFWFLVRVITDNRDGPVQNYLLIFGVLLSVCIQELFRLAYYKLLKKASEGLKSINPEETAPSMRLLAYVSGLGFGIMSGVFSFVNTLSNSLGPGTVGIHGDSPQFFLNSAFMTLVVIMLHVFWGVVFFDGCEKNKWYTLLTVLLTHLVVSTQTFLSPYYEVNLVTAYIIMVLMGIWAFYVAGGSCRSLKLCLLCQDKDFLLYNQRSR</sequence>
<name>APH1B_MOUSE</name>
<comment type="function">
    <text evidence="1">Probable subunit of the gamma-secretase complex, an endoprotease complex that catalyzes the intramembrane cleavage of integral proteins such as Notch receptors and APP (amyloid-beta precursor protein). It probably represents a stabilizing cofactor for the presenilin homodimer that promotes the formation of a stable complex. Probably present in a minority of gamma-secretase complexes compared to APH1A (By similarity).</text>
</comment>
<comment type="subunit">
    <text evidence="1">Probable component of the gamma-secretase complex, a complex composed of a presenilin homodimer (PSEN1 or PSEN2), nicastrin (NCSTN), APH1 (APH1A or APH1B) and PEN2. Such minimal complex is sufficient for secretase activity, although other components may exist (By similarity). Interacts with PSEN1 and PSEN2 (By similarity).</text>
</comment>
<comment type="subcellular location">
    <subcellularLocation>
        <location evidence="4">Membrane</location>
        <topology evidence="4">Multi-pass membrane protein</topology>
    </subcellularLocation>
</comment>
<comment type="alternative products">
    <event type="alternative splicing"/>
    <isoform>
        <id>Q8C7N7-1</id>
        <name>1</name>
        <sequence type="displayed"/>
    </isoform>
    <isoform>
        <id>Q8C7N7-2</id>
        <name>2</name>
        <sequence type="described" ref="VSP_008359 VSP_008360"/>
    </isoform>
</comment>
<comment type="similarity">
    <text evidence="4">Belongs to the APH-1 family.</text>
</comment>